<sequence>MPNLKFIRDRIQSVKNTKKITEAMRLVAAAKVRRAQEQVIATRPFADALAQVLYNLQNRLQFGEVSLPLLTQREIKTVAVLVVTGDRGLCGGYNANVIKRTEQRIKELKSQGINYKLVLIGRKAVQYFERRNAPIQTKYTELSQIPSASEASTISDELLSLFLSETVDRVELIYTRFLSLISSKPVVQTLLPLTTKGLDTPDDEIFRLVTKGGKFQVEREKVSASVSSFPQDMIFEQDPVQILDSLLPLYLNNQLLRALQESAASELAARMTAMSSASDNAGELIKTLSLSYNKARQAAITQEILEVVAGANAL</sequence>
<accession>B7KKR3</accession>
<name>ATPG_GLOC7</name>
<evidence type="ECO:0000255" key="1">
    <source>
        <dbReference type="HAMAP-Rule" id="MF_00815"/>
    </source>
</evidence>
<comment type="function">
    <text evidence="1">Produces ATP from ADP in the presence of a proton gradient across the membrane. The gamma chain is believed to be important in regulating ATPase activity and the flow of protons through the CF(0) complex.</text>
</comment>
<comment type="subunit">
    <text evidence="1">F-type ATPases have 2 components, CF(1) - the catalytic core - and CF(0) - the membrane proton channel. CF(1) has five subunits: alpha(3), beta(3), gamma(1), delta(1), epsilon(1). CF(0) has three main subunits: a, b and c.</text>
</comment>
<comment type="subcellular location">
    <subcellularLocation>
        <location evidence="1">Cellular thylakoid membrane</location>
        <topology evidence="1">Peripheral membrane protein</topology>
    </subcellularLocation>
</comment>
<comment type="similarity">
    <text evidence="1">Belongs to the ATPase gamma chain family.</text>
</comment>
<reference key="1">
    <citation type="journal article" date="2011" name="MBio">
        <title>Novel metabolic attributes of the genus Cyanothece, comprising a group of unicellular nitrogen-fixing Cyanobacteria.</title>
        <authorList>
            <person name="Bandyopadhyay A."/>
            <person name="Elvitigala T."/>
            <person name="Welsh E."/>
            <person name="Stockel J."/>
            <person name="Liberton M."/>
            <person name="Min H."/>
            <person name="Sherman L.A."/>
            <person name="Pakrasi H.B."/>
        </authorList>
    </citation>
    <scope>NUCLEOTIDE SEQUENCE [LARGE SCALE GENOMIC DNA]</scope>
    <source>
        <strain>PCC 7424</strain>
    </source>
</reference>
<organism>
    <name type="scientific">Gloeothece citriformis (strain PCC 7424)</name>
    <name type="common">Cyanothece sp. (strain PCC 7424)</name>
    <dbReference type="NCBI Taxonomy" id="65393"/>
    <lineage>
        <taxon>Bacteria</taxon>
        <taxon>Bacillati</taxon>
        <taxon>Cyanobacteriota</taxon>
        <taxon>Cyanophyceae</taxon>
        <taxon>Oscillatoriophycideae</taxon>
        <taxon>Chroococcales</taxon>
        <taxon>Aphanothecaceae</taxon>
        <taxon>Gloeothece</taxon>
        <taxon>Gloeothece citriformis</taxon>
    </lineage>
</organism>
<proteinExistence type="inferred from homology"/>
<protein>
    <recommendedName>
        <fullName evidence="1">ATP synthase gamma chain</fullName>
    </recommendedName>
    <alternativeName>
        <fullName evidence="1">ATP synthase F1 sector gamma subunit</fullName>
    </alternativeName>
    <alternativeName>
        <fullName evidence="1">F-ATPase gamma subunit</fullName>
    </alternativeName>
</protein>
<feature type="chain" id="PRO_1000134134" description="ATP synthase gamma chain">
    <location>
        <begin position="1"/>
        <end position="314"/>
    </location>
</feature>
<gene>
    <name evidence="1" type="primary">atpG</name>
    <name evidence="1" type="synonym">atpC</name>
    <name type="ordered locus">PCC7424_2618</name>
</gene>
<dbReference type="EMBL" id="CP001291">
    <property type="protein sequence ID" value="ACK71032.1"/>
    <property type="molecule type" value="Genomic_DNA"/>
</dbReference>
<dbReference type="RefSeq" id="WP_015954635.1">
    <property type="nucleotide sequence ID" value="NC_011729.1"/>
</dbReference>
<dbReference type="SMR" id="B7KKR3"/>
<dbReference type="STRING" id="65393.PCC7424_2618"/>
<dbReference type="KEGG" id="cyc:PCC7424_2618"/>
<dbReference type="eggNOG" id="COG0224">
    <property type="taxonomic scope" value="Bacteria"/>
</dbReference>
<dbReference type="HOGENOM" id="CLU_050669_0_0_3"/>
<dbReference type="OrthoDB" id="9812769at2"/>
<dbReference type="Proteomes" id="UP000002384">
    <property type="component" value="Chromosome"/>
</dbReference>
<dbReference type="GO" id="GO:0031676">
    <property type="term" value="C:plasma membrane-derived thylakoid membrane"/>
    <property type="evidence" value="ECO:0007669"/>
    <property type="project" value="UniProtKB-SubCell"/>
</dbReference>
<dbReference type="GO" id="GO:0045259">
    <property type="term" value="C:proton-transporting ATP synthase complex"/>
    <property type="evidence" value="ECO:0007669"/>
    <property type="project" value="UniProtKB-KW"/>
</dbReference>
<dbReference type="GO" id="GO:0005524">
    <property type="term" value="F:ATP binding"/>
    <property type="evidence" value="ECO:0007669"/>
    <property type="project" value="UniProtKB-UniRule"/>
</dbReference>
<dbReference type="GO" id="GO:0046933">
    <property type="term" value="F:proton-transporting ATP synthase activity, rotational mechanism"/>
    <property type="evidence" value="ECO:0007669"/>
    <property type="project" value="UniProtKB-UniRule"/>
</dbReference>
<dbReference type="CDD" id="cd12151">
    <property type="entry name" value="F1-ATPase_gamma"/>
    <property type="match status" value="1"/>
</dbReference>
<dbReference type="FunFam" id="3.40.1380.10:FF:000006">
    <property type="entry name" value="ATP synthase gamma chain"/>
    <property type="match status" value="1"/>
</dbReference>
<dbReference type="FunFam" id="1.10.287.80:FF:000003">
    <property type="entry name" value="ATP synthase gamma chain, chloroplastic"/>
    <property type="match status" value="1"/>
</dbReference>
<dbReference type="FunFam" id="1.10.287.80:FF:000004">
    <property type="entry name" value="ATP synthase gamma chain, chloroplastic"/>
    <property type="match status" value="1"/>
</dbReference>
<dbReference type="Gene3D" id="3.40.1380.10">
    <property type="match status" value="1"/>
</dbReference>
<dbReference type="Gene3D" id="1.10.287.80">
    <property type="entry name" value="ATP synthase, gamma subunit, helix hairpin domain"/>
    <property type="match status" value="2"/>
</dbReference>
<dbReference type="HAMAP" id="MF_00815">
    <property type="entry name" value="ATP_synth_gamma_bact"/>
    <property type="match status" value="1"/>
</dbReference>
<dbReference type="InterPro" id="IPR035968">
    <property type="entry name" value="ATP_synth_F1_ATPase_gsu"/>
</dbReference>
<dbReference type="InterPro" id="IPR000131">
    <property type="entry name" value="ATP_synth_F1_gsu"/>
</dbReference>
<dbReference type="InterPro" id="IPR023632">
    <property type="entry name" value="ATP_synth_F1_gsu_CS"/>
</dbReference>
<dbReference type="NCBIfam" id="TIGR01146">
    <property type="entry name" value="ATPsyn_F1gamma"/>
    <property type="match status" value="1"/>
</dbReference>
<dbReference type="NCBIfam" id="NF004145">
    <property type="entry name" value="PRK05621.1-2"/>
    <property type="match status" value="1"/>
</dbReference>
<dbReference type="PANTHER" id="PTHR11693">
    <property type="entry name" value="ATP SYNTHASE GAMMA CHAIN"/>
    <property type="match status" value="1"/>
</dbReference>
<dbReference type="PANTHER" id="PTHR11693:SF41">
    <property type="entry name" value="ATP SYNTHASE GAMMA CHAIN, CHLOROPLASTIC"/>
    <property type="match status" value="1"/>
</dbReference>
<dbReference type="Pfam" id="PF00231">
    <property type="entry name" value="ATP-synt"/>
    <property type="match status" value="1"/>
</dbReference>
<dbReference type="PRINTS" id="PR00126">
    <property type="entry name" value="ATPASEGAMMA"/>
</dbReference>
<dbReference type="SUPFAM" id="SSF52943">
    <property type="entry name" value="ATP synthase (F1-ATPase), gamma subunit"/>
    <property type="match status" value="1"/>
</dbReference>
<dbReference type="PROSITE" id="PS00153">
    <property type="entry name" value="ATPASE_GAMMA"/>
    <property type="match status" value="1"/>
</dbReference>
<keyword id="KW-0066">ATP synthesis</keyword>
<keyword id="KW-0139">CF(1)</keyword>
<keyword id="KW-0375">Hydrogen ion transport</keyword>
<keyword id="KW-0406">Ion transport</keyword>
<keyword id="KW-0472">Membrane</keyword>
<keyword id="KW-1185">Reference proteome</keyword>
<keyword id="KW-0793">Thylakoid</keyword>
<keyword id="KW-0813">Transport</keyword>